<protein>
    <recommendedName>
        <fullName evidence="1">tRNA uridine(34) hydroxylase</fullName>
        <ecNumber evidence="1">1.14.-.-</ecNumber>
    </recommendedName>
    <alternativeName>
        <fullName evidence="1">tRNA hydroxylation protein O</fullName>
    </alternativeName>
</protein>
<evidence type="ECO:0000255" key="1">
    <source>
        <dbReference type="HAMAP-Rule" id="MF_00469"/>
    </source>
</evidence>
<name>TRHO_BORBR</name>
<comment type="function">
    <text evidence="1">Catalyzes oxygen-dependent 5-hydroxyuridine (ho5U) modification at position 34 in tRNAs.</text>
</comment>
<comment type="catalytic activity">
    <reaction evidence="1">
        <text>uridine(34) in tRNA + AH2 + O2 = 5-hydroxyuridine(34) in tRNA + A + H2O</text>
        <dbReference type="Rhea" id="RHEA:64224"/>
        <dbReference type="Rhea" id="RHEA-COMP:11727"/>
        <dbReference type="Rhea" id="RHEA-COMP:13381"/>
        <dbReference type="ChEBI" id="CHEBI:13193"/>
        <dbReference type="ChEBI" id="CHEBI:15377"/>
        <dbReference type="ChEBI" id="CHEBI:15379"/>
        <dbReference type="ChEBI" id="CHEBI:17499"/>
        <dbReference type="ChEBI" id="CHEBI:65315"/>
        <dbReference type="ChEBI" id="CHEBI:136877"/>
    </reaction>
</comment>
<comment type="similarity">
    <text evidence="1">Belongs to the TrhO family.</text>
</comment>
<dbReference type="EC" id="1.14.-.-" evidence="1"/>
<dbReference type="EMBL" id="BX640439">
    <property type="protein sequence ID" value="CAE31338.1"/>
    <property type="molecule type" value="Genomic_DNA"/>
</dbReference>
<dbReference type="RefSeq" id="WP_003808370.1">
    <property type="nucleotide sequence ID" value="NC_002927.3"/>
</dbReference>
<dbReference type="SMR" id="Q7WP46"/>
<dbReference type="KEGG" id="bbr:BB0839"/>
<dbReference type="eggNOG" id="COG1054">
    <property type="taxonomic scope" value="Bacteria"/>
</dbReference>
<dbReference type="HOGENOM" id="CLU_038878_0_1_4"/>
<dbReference type="Proteomes" id="UP000001027">
    <property type="component" value="Chromosome"/>
</dbReference>
<dbReference type="GO" id="GO:0016705">
    <property type="term" value="F:oxidoreductase activity, acting on paired donors, with incorporation or reduction of molecular oxygen"/>
    <property type="evidence" value="ECO:0007669"/>
    <property type="project" value="UniProtKB-UniRule"/>
</dbReference>
<dbReference type="GO" id="GO:0006400">
    <property type="term" value="P:tRNA modification"/>
    <property type="evidence" value="ECO:0007669"/>
    <property type="project" value="UniProtKB-UniRule"/>
</dbReference>
<dbReference type="CDD" id="cd01518">
    <property type="entry name" value="RHOD_YceA"/>
    <property type="match status" value="1"/>
</dbReference>
<dbReference type="Gene3D" id="3.30.70.100">
    <property type="match status" value="1"/>
</dbReference>
<dbReference type="Gene3D" id="3.40.250.10">
    <property type="entry name" value="Rhodanese-like domain"/>
    <property type="match status" value="1"/>
</dbReference>
<dbReference type="HAMAP" id="MF_00469">
    <property type="entry name" value="TrhO"/>
    <property type="match status" value="1"/>
</dbReference>
<dbReference type="InterPro" id="IPR001763">
    <property type="entry name" value="Rhodanese-like_dom"/>
</dbReference>
<dbReference type="InterPro" id="IPR036873">
    <property type="entry name" value="Rhodanese-like_dom_sf"/>
</dbReference>
<dbReference type="InterPro" id="IPR020936">
    <property type="entry name" value="TrhO"/>
</dbReference>
<dbReference type="InterPro" id="IPR040503">
    <property type="entry name" value="TRHO_N"/>
</dbReference>
<dbReference type="NCBIfam" id="NF003703">
    <property type="entry name" value="PRK05320.1"/>
    <property type="match status" value="1"/>
</dbReference>
<dbReference type="PANTHER" id="PTHR43268:SF3">
    <property type="entry name" value="RHODANESE-LIKE DOMAIN-CONTAINING PROTEIN 7-RELATED"/>
    <property type="match status" value="1"/>
</dbReference>
<dbReference type="PANTHER" id="PTHR43268">
    <property type="entry name" value="THIOSULFATE SULFURTRANSFERASE/RHODANESE-LIKE DOMAIN-CONTAINING PROTEIN 2"/>
    <property type="match status" value="1"/>
</dbReference>
<dbReference type="Pfam" id="PF00581">
    <property type="entry name" value="Rhodanese"/>
    <property type="match status" value="1"/>
</dbReference>
<dbReference type="Pfam" id="PF17773">
    <property type="entry name" value="UPF0176_N"/>
    <property type="match status" value="1"/>
</dbReference>
<dbReference type="SMART" id="SM00450">
    <property type="entry name" value="RHOD"/>
    <property type="match status" value="1"/>
</dbReference>
<dbReference type="SUPFAM" id="SSF52821">
    <property type="entry name" value="Rhodanese/Cell cycle control phosphatase"/>
    <property type="match status" value="1"/>
</dbReference>
<dbReference type="PROSITE" id="PS50206">
    <property type="entry name" value="RHODANESE_3"/>
    <property type="match status" value="1"/>
</dbReference>
<reference key="1">
    <citation type="journal article" date="2003" name="Nat. Genet.">
        <title>Comparative analysis of the genome sequences of Bordetella pertussis, Bordetella parapertussis and Bordetella bronchiseptica.</title>
        <authorList>
            <person name="Parkhill J."/>
            <person name="Sebaihia M."/>
            <person name="Preston A."/>
            <person name="Murphy L.D."/>
            <person name="Thomson N.R."/>
            <person name="Harris D.E."/>
            <person name="Holden M.T.G."/>
            <person name="Churcher C.M."/>
            <person name="Bentley S.D."/>
            <person name="Mungall K.L."/>
            <person name="Cerdeno-Tarraga A.-M."/>
            <person name="Temple L."/>
            <person name="James K.D."/>
            <person name="Harris B."/>
            <person name="Quail M.A."/>
            <person name="Achtman M."/>
            <person name="Atkin R."/>
            <person name="Baker S."/>
            <person name="Basham D."/>
            <person name="Bason N."/>
            <person name="Cherevach I."/>
            <person name="Chillingworth T."/>
            <person name="Collins M."/>
            <person name="Cronin A."/>
            <person name="Davis P."/>
            <person name="Doggett J."/>
            <person name="Feltwell T."/>
            <person name="Goble A."/>
            <person name="Hamlin N."/>
            <person name="Hauser H."/>
            <person name="Holroyd S."/>
            <person name="Jagels K."/>
            <person name="Leather S."/>
            <person name="Moule S."/>
            <person name="Norberczak H."/>
            <person name="O'Neil S."/>
            <person name="Ormond D."/>
            <person name="Price C."/>
            <person name="Rabbinowitsch E."/>
            <person name="Rutter S."/>
            <person name="Sanders M."/>
            <person name="Saunders D."/>
            <person name="Seeger K."/>
            <person name="Sharp S."/>
            <person name="Simmonds M."/>
            <person name="Skelton J."/>
            <person name="Squares R."/>
            <person name="Squares S."/>
            <person name="Stevens K."/>
            <person name="Unwin L."/>
            <person name="Whitehead S."/>
            <person name="Barrell B.G."/>
            <person name="Maskell D.J."/>
        </authorList>
    </citation>
    <scope>NUCLEOTIDE SEQUENCE [LARGE SCALE GENOMIC DNA]</scope>
    <source>
        <strain>ATCC BAA-588 / NCTC 13252 / RB50</strain>
    </source>
</reference>
<feature type="chain" id="PRO_0000161448" description="tRNA uridine(34) hydroxylase">
    <location>
        <begin position="1"/>
        <end position="244"/>
    </location>
</feature>
<feature type="domain" description="Rhodanese" evidence="1">
    <location>
        <begin position="129"/>
        <end position="219"/>
    </location>
</feature>
<feature type="active site" description="Cysteine persulfide intermediate" evidence="1">
    <location>
        <position position="183"/>
    </location>
</feature>
<keyword id="KW-0560">Oxidoreductase</keyword>
<keyword id="KW-0819">tRNA processing</keyword>
<gene>
    <name evidence="1" type="primary">trhO</name>
    <name type="ordered locus">BB0839</name>
</gene>
<sequence length="244" mass="26937">MTAVVNIAAYKFVSIANPADLREPMLEQAGQRQLKGTVLLAPEGINLFLAGAADAIEGFLRWLRADARFADLQAKYSESARMPFRKLLVKVKREIIRMDHPAIRPEAGRAPAVDAATLRRWLAQGRDDQGRELVMLDTRNAFEVEVGTFRGALDWRIERFTQFPQAVRDNQAALAGKTVVSFCTGGIRCEKAAIYMAEAGIEHVYQLEGGILKYFEETDGAGFDGACFVFDERVALDAALAPQA</sequence>
<accession>Q7WP46</accession>
<organism>
    <name type="scientific">Bordetella bronchiseptica (strain ATCC BAA-588 / NCTC 13252 / RB50)</name>
    <name type="common">Alcaligenes bronchisepticus</name>
    <dbReference type="NCBI Taxonomy" id="257310"/>
    <lineage>
        <taxon>Bacteria</taxon>
        <taxon>Pseudomonadati</taxon>
        <taxon>Pseudomonadota</taxon>
        <taxon>Betaproteobacteria</taxon>
        <taxon>Burkholderiales</taxon>
        <taxon>Alcaligenaceae</taxon>
        <taxon>Bordetella</taxon>
    </lineage>
</organism>
<proteinExistence type="inferred from homology"/>